<feature type="chain" id="PRO_1000136965" description="5'-deoxynucleotidase YfbR">
    <location>
        <begin position="1"/>
        <end position="199"/>
    </location>
</feature>
<feature type="domain" description="HD" evidence="2">
    <location>
        <begin position="30"/>
        <end position="142"/>
    </location>
</feature>
<feature type="binding site" evidence="1">
    <location>
        <begin position="18"/>
        <end position="19"/>
    </location>
    <ligand>
        <name>substrate</name>
    </ligand>
</feature>
<feature type="binding site" evidence="1">
    <location>
        <position position="33"/>
    </location>
    <ligand>
        <name>a divalent metal cation</name>
        <dbReference type="ChEBI" id="CHEBI:60240"/>
    </ligand>
</feature>
<feature type="binding site" evidence="1">
    <location>
        <position position="33"/>
    </location>
    <ligand>
        <name>substrate</name>
    </ligand>
</feature>
<feature type="binding site" evidence="1">
    <location>
        <position position="68"/>
    </location>
    <ligand>
        <name>a divalent metal cation</name>
        <dbReference type="ChEBI" id="CHEBI:60240"/>
    </ligand>
</feature>
<feature type="binding site" evidence="1">
    <location>
        <position position="69"/>
    </location>
    <ligand>
        <name>a divalent metal cation</name>
        <dbReference type="ChEBI" id="CHEBI:60240"/>
    </ligand>
</feature>
<feature type="binding site" evidence="1">
    <location>
        <position position="69"/>
    </location>
    <ligand>
        <name>substrate</name>
    </ligand>
</feature>
<feature type="binding site" evidence="1">
    <location>
        <begin position="77"/>
        <end position="80"/>
    </location>
    <ligand>
        <name>substrate</name>
    </ligand>
</feature>
<feature type="binding site" evidence="1">
    <location>
        <position position="137"/>
    </location>
    <ligand>
        <name>a divalent metal cation</name>
        <dbReference type="ChEBI" id="CHEBI:60240"/>
    </ligand>
</feature>
<feature type="binding site" evidence="1">
    <location>
        <position position="137"/>
    </location>
    <ligand>
        <name>substrate</name>
    </ligand>
</feature>
<feature type="site" description="Appears to be important in orienting the phosphate for catalysis" evidence="1">
    <location>
        <position position="18"/>
    </location>
</feature>
<evidence type="ECO:0000255" key="1">
    <source>
        <dbReference type="HAMAP-Rule" id="MF_01100"/>
    </source>
</evidence>
<evidence type="ECO:0000255" key="2">
    <source>
        <dbReference type="PROSITE-ProRule" id="PRU01175"/>
    </source>
</evidence>
<dbReference type="EC" id="3.1.3.89" evidence="1"/>
<dbReference type="EMBL" id="CP000948">
    <property type="protein sequence ID" value="ACB03450.1"/>
    <property type="molecule type" value="Genomic_DNA"/>
</dbReference>
<dbReference type="RefSeq" id="WP_000813859.1">
    <property type="nucleotide sequence ID" value="NC_010473.1"/>
</dbReference>
<dbReference type="SMR" id="B1X903"/>
<dbReference type="KEGG" id="ecd:ECDH10B_2453"/>
<dbReference type="HOGENOM" id="CLU_084784_0_0_6"/>
<dbReference type="GO" id="GO:0005737">
    <property type="term" value="C:cytoplasm"/>
    <property type="evidence" value="ECO:0007669"/>
    <property type="project" value="UniProtKB-SubCell"/>
</dbReference>
<dbReference type="GO" id="GO:0002953">
    <property type="term" value="F:5'-deoxynucleotidase activity"/>
    <property type="evidence" value="ECO:0007669"/>
    <property type="project" value="UniProtKB-EC"/>
</dbReference>
<dbReference type="GO" id="GO:0046872">
    <property type="term" value="F:metal ion binding"/>
    <property type="evidence" value="ECO:0007669"/>
    <property type="project" value="UniProtKB-KW"/>
</dbReference>
<dbReference type="GO" id="GO:0000166">
    <property type="term" value="F:nucleotide binding"/>
    <property type="evidence" value="ECO:0007669"/>
    <property type="project" value="UniProtKB-KW"/>
</dbReference>
<dbReference type="CDD" id="cd00077">
    <property type="entry name" value="HDc"/>
    <property type="match status" value="1"/>
</dbReference>
<dbReference type="FunFam" id="1.10.3210.10:FF:000002">
    <property type="entry name" value="Nucleotidase YfbR"/>
    <property type="match status" value="1"/>
</dbReference>
<dbReference type="Gene3D" id="1.10.3210.10">
    <property type="entry name" value="Hypothetical protein af1432"/>
    <property type="match status" value="1"/>
</dbReference>
<dbReference type="HAMAP" id="MF_01100">
    <property type="entry name" value="5DNU"/>
    <property type="match status" value="1"/>
</dbReference>
<dbReference type="InterPro" id="IPR003607">
    <property type="entry name" value="HD/PDEase_dom"/>
</dbReference>
<dbReference type="InterPro" id="IPR006674">
    <property type="entry name" value="HD_domain"/>
</dbReference>
<dbReference type="InterPro" id="IPR022971">
    <property type="entry name" value="YfbR"/>
</dbReference>
<dbReference type="InterPro" id="IPR039356">
    <property type="entry name" value="YfbR/HDDC2"/>
</dbReference>
<dbReference type="NCBIfam" id="NF003009">
    <property type="entry name" value="PRK03826.1"/>
    <property type="match status" value="1"/>
</dbReference>
<dbReference type="PANTHER" id="PTHR11845">
    <property type="entry name" value="5'-DEOXYNUCLEOTIDASE HDDC2"/>
    <property type="match status" value="1"/>
</dbReference>
<dbReference type="PANTHER" id="PTHR11845:SF13">
    <property type="entry name" value="5'-DEOXYNUCLEOTIDASE HDDC2"/>
    <property type="match status" value="1"/>
</dbReference>
<dbReference type="Pfam" id="PF12917">
    <property type="entry name" value="YfbR-like"/>
    <property type="match status" value="1"/>
</dbReference>
<dbReference type="SMART" id="SM00471">
    <property type="entry name" value="HDc"/>
    <property type="match status" value="1"/>
</dbReference>
<dbReference type="SUPFAM" id="SSF109604">
    <property type="entry name" value="HD-domain/PDEase-like"/>
    <property type="match status" value="1"/>
</dbReference>
<dbReference type="PROSITE" id="PS51831">
    <property type="entry name" value="HD"/>
    <property type="match status" value="1"/>
</dbReference>
<gene>
    <name evidence="1" type="primary">yfbR</name>
    <name type="ordered locus">ECDH10B_2453</name>
</gene>
<organism>
    <name type="scientific">Escherichia coli (strain K12 / DH10B)</name>
    <dbReference type="NCBI Taxonomy" id="316385"/>
    <lineage>
        <taxon>Bacteria</taxon>
        <taxon>Pseudomonadati</taxon>
        <taxon>Pseudomonadota</taxon>
        <taxon>Gammaproteobacteria</taxon>
        <taxon>Enterobacterales</taxon>
        <taxon>Enterobacteriaceae</taxon>
        <taxon>Escherichia</taxon>
    </lineage>
</organism>
<protein>
    <recommendedName>
        <fullName evidence="1">5'-deoxynucleotidase YfbR</fullName>
        <ecNumber evidence="1">3.1.3.89</ecNumber>
    </recommendedName>
    <alternativeName>
        <fullName evidence="1">5'-deoxyribonucleotidase</fullName>
    </alternativeName>
    <alternativeName>
        <fullName evidence="1">Nucleoside 5'-monophosphate phosphohydrolase</fullName>
    </alternativeName>
</protein>
<keyword id="KW-0963">Cytoplasm</keyword>
<keyword id="KW-0378">Hydrolase</keyword>
<keyword id="KW-0479">Metal-binding</keyword>
<keyword id="KW-0547">Nucleotide-binding</keyword>
<accession>B1X903</accession>
<name>5DNU_ECODH</name>
<reference key="1">
    <citation type="journal article" date="2008" name="J. Bacteriol.">
        <title>The complete genome sequence of Escherichia coli DH10B: insights into the biology of a laboratory workhorse.</title>
        <authorList>
            <person name="Durfee T."/>
            <person name="Nelson R."/>
            <person name="Baldwin S."/>
            <person name="Plunkett G. III"/>
            <person name="Burland V."/>
            <person name="Mau B."/>
            <person name="Petrosino J.F."/>
            <person name="Qin X."/>
            <person name="Muzny D.M."/>
            <person name="Ayele M."/>
            <person name="Gibbs R.A."/>
            <person name="Csorgo B."/>
            <person name="Posfai G."/>
            <person name="Weinstock G.M."/>
            <person name="Blattner F.R."/>
        </authorList>
    </citation>
    <scope>NUCLEOTIDE SEQUENCE [LARGE SCALE GENOMIC DNA]</scope>
    <source>
        <strain>K12 / DH10B</strain>
    </source>
</reference>
<sequence>MKQSHFFAHLSRLKLINRWPLMRNVRTENVSEHSLQVAMVAHALAAIKNRKFGGNVNAERIALLAMYHDASEVLTGDLPTPVKYFNSQIAQEYKAIEKIAQQKLVDMVPEELRDIFAPLIDEHAYSDEEKSLVKQADALCAYLKCLEELAAGNNEFLLAKTRLEATLEARRSQEMDYFMEIFVPSFHLSLDEISQDSPL</sequence>
<comment type="function">
    <text evidence="1">Catalyzes the strictly specific dephosphorylation of 2'-deoxyribonucleoside 5'-monophosphates.</text>
</comment>
<comment type="catalytic activity">
    <reaction evidence="1">
        <text>a 2'-deoxyribonucleoside 5'-phosphate + H2O = a 2'-deoxyribonucleoside + phosphate</text>
        <dbReference type="Rhea" id="RHEA:36167"/>
        <dbReference type="ChEBI" id="CHEBI:15377"/>
        <dbReference type="ChEBI" id="CHEBI:18274"/>
        <dbReference type="ChEBI" id="CHEBI:43474"/>
        <dbReference type="ChEBI" id="CHEBI:65317"/>
        <dbReference type="EC" id="3.1.3.89"/>
    </reaction>
</comment>
<comment type="cofactor">
    <cofactor evidence="1">
        <name>a divalent metal cation</name>
        <dbReference type="ChEBI" id="CHEBI:60240"/>
    </cofactor>
</comment>
<comment type="subunit">
    <text evidence="1">Homodimer.</text>
</comment>
<comment type="subcellular location">
    <subcellularLocation>
        <location evidence="1">Cytoplasm</location>
    </subcellularLocation>
</comment>
<comment type="similarity">
    <text evidence="1">Belongs to the 5DNU family.</text>
</comment>
<proteinExistence type="inferred from homology"/>